<sequence>MADVTVEVRGSNGAFYKGFIKDVHEDSLTVVFENNWQPERQVPFNEVRLPPPPDIKKEISEGDEVEVYSRANDQEPCGWWLAKVRMMKGEFYVIEYAACDATYNEIVTFERLRPVNQNKTVKKNTFFKCTVDVPEDLREACANENAHKDFKKAVGACRIFYHPETTQLMILSASEATVKRVNILSDMHLRSIRTKLMLMSRNEEATKHLECTKQLAAAFHEEFVVREDLMGLAIGTHGSNIQQARKVPGVTAIELDEDTGTFRIYGESAEAVKKARGFMEFVEDFIQVPRNLVGKVIGKNGKVIQEIVDKSGVVRVRIEGDNENKLPREDGMVPFVFVGTKESIGNVQVLLEYHIAYLKEVEQLRMERLQIDEQLRQIGSRSYSGRGRGRRGPNYTSGYGTNSELSNPSETESERKDELSDWSLAGEDDRETRHQRDSRRRPGGRGRSVSGGRGRGGPRGGKSSISSVLKDPDSNPYSLLDNTESDQTADTDASESHHSTNRRRRSRRRRTDEDAVLMDGMTESDTASVNENGLVTVADYISRAESQSRQRNLPRETLAKNKKEMAKDVIEEHGPSEKAINGPTSASGDEIPNVPRTPGEEKTKNLKEESTQEAAVLNGVS</sequence>
<evidence type="ECO:0000250" key="1">
    <source>
        <dbReference type="UniProtKB" id="P35922"/>
    </source>
</evidence>
<evidence type="ECO:0000250" key="2">
    <source>
        <dbReference type="UniProtKB" id="P51114"/>
    </source>
</evidence>
<evidence type="ECO:0000250" key="3">
    <source>
        <dbReference type="UniProtKB" id="P51116"/>
    </source>
</evidence>
<evidence type="ECO:0000250" key="4">
    <source>
        <dbReference type="UniProtKB" id="Q5XI81"/>
    </source>
</evidence>
<evidence type="ECO:0000250" key="5">
    <source>
        <dbReference type="UniProtKB" id="Q61584"/>
    </source>
</evidence>
<evidence type="ECO:0000255" key="6">
    <source>
        <dbReference type="PROSITE-ProRule" id="PRU00117"/>
    </source>
</evidence>
<evidence type="ECO:0000255" key="7">
    <source>
        <dbReference type="PROSITE-ProRule" id="PRU00973"/>
    </source>
</evidence>
<evidence type="ECO:0000256" key="8">
    <source>
        <dbReference type="SAM" id="MobiDB-lite"/>
    </source>
</evidence>
<evidence type="ECO:0000305" key="9"/>
<gene>
    <name type="primary">FXR1</name>
</gene>
<accession>O70523</accession>
<protein>
    <recommendedName>
        <fullName evidence="9">RNA-binding protein FXR1</fullName>
    </recommendedName>
</protein>
<keyword id="KW-0007">Acetylation</keyword>
<keyword id="KW-0966">Cell projection</keyword>
<keyword id="KW-0963">Cytoplasm</keyword>
<keyword id="KW-0217">Developmental protein</keyword>
<keyword id="KW-0221">Differentiation</keyword>
<keyword id="KW-1017">Isopeptide bond</keyword>
<keyword id="KW-0488">Methylation</keyword>
<keyword id="KW-0517">Myogenesis</keyword>
<keyword id="KW-0539">Nucleus</keyword>
<keyword id="KW-0597">Phosphoprotein</keyword>
<keyword id="KW-0677">Repeat</keyword>
<keyword id="KW-0694">RNA-binding</keyword>
<keyword id="KW-0744">Spermatogenesis</keyword>
<keyword id="KW-0770">Synapse</keyword>
<keyword id="KW-0832">Ubl conjugation</keyword>
<proteinExistence type="evidence at transcript level"/>
<organism>
    <name type="scientific">Cricetulus griseus</name>
    <name type="common">Chinese hamster</name>
    <name type="synonym">Cricetulus barabensis griseus</name>
    <dbReference type="NCBI Taxonomy" id="10029"/>
    <lineage>
        <taxon>Eukaryota</taxon>
        <taxon>Metazoa</taxon>
        <taxon>Chordata</taxon>
        <taxon>Craniata</taxon>
        <taxon>Vertebrata</taxon>
        <taxon>Euteleostomi</taxon>
        <taxon>Mammalia</taxon>
        <taxon>Eutheria</taxon>
        <taxon>Euarchontoglires</taxon>
        <taxon>Glires</taxon>
        <taxon>Rodentia</taxon>
        <taxon>Myomorpha</taxon>
        <taxon>Muroidea</taxon>
        <taxon>Cricetidae</taxon>
        <taxon>Cricetinae</taxon>
        <taxon>Cricetulus</taxon>
    </lineage>
</organism>
<feature type="initiator methionine" description="Removed" evidence="2">
    <location>
        <position position="1"/>
    </location>
</feature>
<feature type="chain" id="PRO_0000050105" description="RNA-binding protein FXR1">
    <location>
        <begin position="2"/>
        <end position="621"/>
    </location>
</feature>
<feature type="domain" description="Agenet-like 1" evidence="7">
    <location>
        <begin position="4"/>
        <end position="50"/>
    </location>
</feature>
<feature type="domain" description="Agenet-like 2" evidence="7">
    <location>
        <begin position="63"/>
        <end position="115"/>
    </location>
</feature>
<feature type="domain" description="KH 1" evidence="6">
    <location>
        <begin position="222"/>
        <end position="251"/>
    </location>
</feature>
<feature type="domain" description="KH 2" evidence="6">
    <location>
        <begin position="285"/>
        <end position="314"/>
    </location>
</feature>
<feature type="region of interest" description="CC1 domain" evidence="2">
    <location>
        <begin position="201"/>
        <end position="208"/>
    </location>
</feature>
<feature type="region of interest" description="CC2 domain" evidence="2">
    <location>
        <begin position="353"/>
        <end position="379"/>
    </location>
</feature>
<feature type="region of interest" description="Disordered" evidence="8">
    <location>
        <begin position="381"/>
        <end position="530"/>
    </location>
</feature>
<feature type="region of interest" description="RNA-binding RGG-box">
    <location>
        <begin position="442"/>
        <end position="457"/>
    </location>
</feature>
<feature type="region of interest" description="Disordered" evidence="8">
    <location>
        <begin position="545"/>
        <end position="621"/>
    </location>
</feature>
<feature type="compositionally biased region" description="Polar residues" evidence="8">
    <location>
        <begin position="394"/>
        <end position="410"/>
    </location>
</feature>
<feature type="compositionally biased region" description="Gly residues" evidence="8">
    <location>
        <begin position="445"/>
        <end position="460"/>
    </location>
</feature>
<feature type="compositionally biased region" description="Acidic residues" evidence="8">
    <location>
        <begin position="483"/>
        <end position="493"/>
    </location>
</feature>
<feature type="compositionally biased region" description="Basic residues" evidence="8">
    <location>
        <begin position="499"/>
        <end position="509"/>
    </location>
</feature>
<feature type="compositionally biased region" description="Basic and acidic residues" evidence="8">
    <location>
        <begin position="553"/>
        <end position="576"/>
    </location>
</feature>
<feature type="compositionally biased region" description="Basic and acidic residues" evidence="8">
    <location>
        <begin position="598"/>
        <end position="610"/>
    </location>
</feature>
<feature type="modified residue" description="N-acetylalanine" evidence="2">
    <location>
        <position position="2"/>
    </location>
</feature>
<feature type="modified residue" description="Phosphotyrosine" evidence="5">
    <location>
        <position position="68"/>
    </location>
</feature>
<feature type="modified residue" description="Phosphothreonine" evidence="2">
    <location>
        <position position="401"/>
    </location>
</feature>
<feature type="modified residue" description="Phosphoserine" evidence="4">
    <location>
        <position position="403"/>
    </location>
</feature>
<feature type="modified residue" description="Phosphoserine" evidence="2">
    <location>
        <position position="406"/>
    </location>
</feature>
<feature type="modified residue" description="Phosphoserine" evidence="2">
    <location>
        <position position="409"/>
    </location>
</feature>
<feature type="modified residue" description="Phosphoserine" evidence="2">
    <location>
        <position position="420"/>
    </location>
</feature>
<feature type="modified residue" description="Phosphoserine" evidence="2">
    <location>
        <position position="423"/>
    </location>
</feature>
<feature type="modified residue" description="Asymmetric dimethylarginine; alternate" evidence="1">
    <location>
        <position position="447"/>
    </location>
</feature>
<feature type="modified residue" description="Omega-N-methylarginine; alternate" evidence="1">
    <location>
        <position position="447"/>
    </location>
</feature>
<feature type="modified residue" description="Asymmetric dimethylarginine; alternate" evidence="1">
    <location>
        <position position="453"/>
    </location>
</feature>
<feature type="modified residue" description="Omega-N-methylarginine; alternate" evidence="1">
    <location>
        <position position="453"/>
    </location>
</feature>
<feature type="modified residue" description="Asymmetric dimethylarginine; alternate" evidence="1">
    <location>
        <position position="455"/>
    </location>
</feature>
<feature type="modified residue" description="Omega-N-methylarginine; alternate" evidence="1">
    <location>
        <position position="455"/>
    </location>
</feature>
<feature type="modified residue" description="Phosphothreonine" evidence="5">
    <location>
        <position position="483"/>
    </location>
</feature>
<feature type="modified residue" description="Phosphoserine" evidence="2">
    <location>
        <position position="485"/>
    </location>
</feature>
<feature type="modified residue" description="Phosphoserine" evidence="3">
    <location>
        <position position="524"/>
    </location>
</feature>
<feature type="modified residue" description="Phosphoserine" evidence="2">
    <location>
        <position position="587"/>
    </location>
</feature>
<feature type="modified residue" description="Phosphothreonine" evidence="2">
    <location>
        <position position="611"/>
    </location>
</feature>
<feature type="cross-link" description="Glycyl lysine isopeptide (Lys-Gly) (interchain with G-Cter in SUMO2)" evidence="2">
    <location>
        <position position="56"/>
    </location>
</feature>
<dbReference type="EMBL" id="Y12837">
    <property type="protein sequence ID" value="CAA73358.1"/>
    <property type="molecule type" value="mRNA"/>
</dbReference>
<dbReference type="RefSeq" id="NP_001233685.1">
    <property type="nucleotide sequence ID" value="NM_001246756.1"/>
</dbReference>
<dbReference type="SMR" id="O70523"/>
<dbReference type="PaxDb" id="10029-NP_001233685.1"/>
<dbReference type="GeneID" id="100689323"/>
<dbReference type="KEGG" id="cge:100689323"/>
<dbReference type="CTD" id="8087"/>
<dbReference type="eggNOG" id="ENOG502QPKJ">
    <property type="taxonomic scope" value="Eukaryota"/>
</dbReference>
<dbReference type="OrthoDB" id="424249at2759"/>
<dbReference type="Proteomes" id="UP000694386">
    <property type="component" value="Unplaced"/>
</dbReference>
<dbReference type="Proteomes" id="UP001108280">
    <property type="component" value="Chromosome 1"/>
</dbReference>
<dbReference type="GO" id="GO:0030424">
    <property type="term" value="C:axon"/>
    <property type="evidence" value="ECO:0007669"/>
    <property type="project" value="UniProtKB-SubCell"/>
</dbReference>
<dbReference type="GO" id="GO:0036464">
    <property type="term" value="C:cytoplasmic ribonucleoprotein granule"/>
    <property type="evidence" value="ECO:0000250"/>
    <property type="project" value="UniProtKB"/>
</dbReference>
<dbReference type="GO" id="GO:0010494">
    <property type="term" value="C:cytoplasmic stress granule"/>
    <property type="evidence" value="ECO:0007669"/>
    <property type="project" value="UniProtKB-SubCell"/>
</dbReference>
<dbReference type="GO" id="GO:0043197">
    <property type="term" value="C:dendritic spine"/>
    <property type="evidence" value="ECO:0007669"/>
    <property type="project" value="UniProtKB-SubCell"/>
</dbReference>
<dbReference type="GO" id="GO:0043232">
    <property type="term" value="C:intracellular membraneless organelle"/>
    <property type="evidence" value="ECO:0000250"/>
    <property type="project" value="UniProtKB"/>
</dbReference>
<dbReference type="GO" id="GO:0005635">
    <property type="term" value="C:nuclear envelope"/>
    <property type="evidence" value="ECO:0000250"/>
    <property type="project" value="UniProtKB"/>
</dbReference>
<dbReference type="GO" id="GO:0098793">
    <property type="term" value="C:presynapse"/>
    <property type="evidence" value="ECO:0007669"/>
    <property type="project" value="GOC"/>
</dbReference>
<dbReference type="GO" id="GO:0140693">
    <property type="term" value="F:molecular condensate scaffold activity"/>
    <property type="evidence" value="ECO:0000250"/>
    <property type="project" value="UniProtKB"/>
</dbReference>
<dbReference type="GO" id="GO:0035925">
    <property type="term" value="F:mRNA 3'-UTR AU-rich region binding"/>
    <property type="evidence" value="ECO:0000250"/>
    <property type="project" value="UniProtKB"/>
</dbReference>
<dbReference type="GO" id="GO:0003729">
    <property type="term" value="F:mRNA binding"/>
    <property type="evidence" value="ECO:0000250"/>
    <property type="project" value="UniProtKB"/>
</dbReference>
<dbReference type="GO" id="GO:0046982">
    <property type="term" value="F:protein heterodimerization activity"/>
    <property type="evidence" value="ECO:0000250"/>
    <property type="project" value="UniProtKB"/>
</dbReference>
<dbReference type="GO" id="GO:0042803">
    <property type="term" value="F:protein homodimerization activity"/>
    <property type="evidence" value="ECO:0000250"/>
    <property type="project" value="UniProtKB"/>
</dbReference>
<dbReference type="GO" id="GO:0033592">
    <property type="term" value="F:RNA strand annealing activity"/>
    <property type="evidence" value="ECO:0000250"/>
    <property type="project" value="UniProtKB"/>
</dbReference>
<dbReference type="GO" id="GO:0045182">
    <property type="term" value="F:translation regulator activity"/>
    <property type="evidence" value="ECO:0007669"/>
    <property type="project" value="TreeGrafter"/>
</dbReference>
<dbReference type="GO" id="GO:0021542">
    <property type="term" value="P:dentate gyrus development"/>
    <property type="evidence" value="ECO:0000250"/>
    <property type="project" value="UniProtKB"/>
</dbReference>
<dbReference type="GO" id="GO:0140694">
    <property type="term" value="P:membraneless organelle assembly"/>
    <property type="evidence" value="ECO:0000250"/>
    <property type="project" value="UniProtKB"/>
</dbReference>
<dbReference type="GO" id="GO:0061157">
    <property type="term" value="P:mRNA destabilization"/>
    <property type="evidence" value="ECO:0000250"/>
    <property type="project" value="UniProtKB"/>
</dbReference>
<dbReference type="GO" id="GO:0051028">
    <property type="term" value="P:mRNA transport"/>
    <property type="evidence" value="ECO:0007669"/>
    <property type="project" value="TreeGrafter"/>
</dbReference>
<dbReference type="GO" id="GO:0007517">
    <property type="term" value="P:muscle organ development"/>
    <property type="evidence" value="ECO:0007669"/>
    <property type="project" value="UniProtKB-KW"/>
</dbReference>
<dbReference type="GO" id="GO:0050728">
    <property type="term" value="P:negative regulation of inflammatory response"/>
    <property type="evidence" value="ECO:0000250"/>
    <property type="project" value="UniProtKB"/>
</dbReference>
<dbReference type="GO" id="GO:1900272">
    <property type="term" value="P:negative regulation of long-term synaptic potentiation"/>
    <property type="evidence" value="ECO:0000250"/>
    <property type="project" value="UniProtKB"/>
</dbReference>
<dbReference type="GO" id="GO:0017148">
    <property type="term" value="P:negative regulation of translation"/>
    <property type="evidence" value="ECO:0000250"/>
    <property type="project" value="UniProtKB"/>
</dbReference>
<dbReference type="GO" id="GO:0032720">
    <property type="term" value="P:negative regulation of tumor necrosis factor production"/>
    <property type="evidence" value="ECO:0000250"/>
    <property type="project" value="UniProtKB"/>
</dbReference>
<dbReference type="GO" id="GO:0051292">
    <property type="term" value="P:nuclear pore complex assembly"/>
    <property type="evidence" value="ECO:0000250"/>
    <property type="project" value="UniProtKB"/>
</dbReference>
<dbReference type="GO" id="GO:0051664">
    <property type="term" value="P:nuclear pore localization"/>
    <property type="evidence" value="ECO:0000250"/>
    <property type="project" value="UniProtKB"/>
</dbReference>
<dbReference type="GO" id="GO:0048170">
    <property type="term" value="P:positive regulation of long-term neuronal synaptic plasticity"/>
    <property type="evidence" value="ECO:0007669"/>
    <property type="project" value="TreeGrafter"/>
</dbReference>
<dbReference type="GO" id="GO:2000637">
    <property type="term" value="P:positive regulation of miRNA-mediated gene silencing"/>
    <property type="evidence" value="ECO:0000250"/>
    <property type="project" value="UniProtKB"/>
</dbReference>
<dbReference type="GO" id="GO:0045727">
    <property type="term" value="P:positive regulation of translation"/>
    <property type="evidence" value="ECO:0000250"/>
    <property type="project" value="UniProtKB"/>
</dbReference>
<dbReference type="GO" id="GO:0010608">
    <property type="term" value="P:post-transcriptional regulation of gene expression"/>
    <property type="evidence" value="ECO:0000250"/>
    <property type="project" value="UniProtKB"/>
</dbReference>
<dbReference type="GO" id="GO:0045187">
    <property type="term" value="P:regulation of circadian sleep/wake cycle, sleep"/>
    <property type="evidence" value="ECO:0000250"/>
    <property type="project" value="UniProtKB"/>
</dbReference>
<dbReference type="GO" id="GO:0050767">
    <property type="term" value="P:regulation of neurogenesis"/>
    <property type="evidence" value="ECO:0000250"/>
    <property type="project" value="UniProtKB"/>
</dbReference>
<dbReference type="GO" id="GO:0051966">
    <property type="term" value="P:regulation of synaptic transmission, glutamatergic"/>
    <property type="evidence" value="ECO:0000250"/>
    <property type="project" value="UniProtKB"/>
</dbReference>
<dbReference type="GO" id="GO:0099577">
    <property type="term" value="P:regulation of translation at presynapse, modulating synaptic transmission"/>
    <property type="evidence" value="ECO:0007669"/>
    <property type="project" value="TreeGrafter"/>
</dbReference>
<dbReference type="GO" id="GO:0007286">
    <property type="term" value="P:spermatid development"/>
    <property type="evidence" value="ECO:0000250"/>
    <property type="project" value="UniProtKB"/>
</dbReference>
<dbReference type="CDD" id="cd22504">
    <property type="entry name" value="KH_I_FXR1_rpt1"/>
    <property type="match status" value="1"/>
</dbReference>
<dbReference type="CDD" id="cd22507">
    <property type="entry name" value="KH_I_FXR1_rpt2"/>
    <property type="match status" value="1"/>
</dbReference>
<dbReference type="CDD" id="cd22510">
    <property type="entry name" value="KH_I_FXR1_rpt3"/>
    <property type="match status" value="1"/>
</dbReference>
<dbReference type="CDD" id="cd20472">
    <property type="entry name" value="Tudor_Agenet_FXR1_rpt1"/>
    <property type="match status" value="1"/>
</dbReference>
<dbReference type="CDD" id="cd20475">
    <property type="entry name" value="Tudor_Agenet_FXR1_rpt2"/>
    <property type="match status" value="1"/>
</dbReference>
<dbReference type="FunFam" id="2.30.30.140:FF:000001">
    <property type="entry name" value="Fragile X mental retardation 1, isoform CRA_e"/>
    <property type="match status" value="1"/>
</dbReference>
<dbReference type="FunFam" id="2.30.30.140:FF:000002">
    <property type="entry name" value="Fragile X mental retardation 1, isoform CRA_e"/>
    <property type="match status" value="1"/>
</dbReference>
<dbReference type="FunFam" id="3.30.1370.10:FF:000004">
    <property type="entry name" value="Fragile X mental retardation 1, isoform CRA_e"/>
    <property type="match status" value="1"/>
</dbReference>
<dbReference type="FunFam" id="3.30.1370.10:FF:000017">
    <property type="entry name" value="Fragile X mental retardation syndrome-related protein 1"/>
    <property type="match status" value="1"/>
</dbReference>
<dbReference type="Gene3D" id="2.30.30.140">
    <property type="match status" value="2"/>
</dbReference>
<dbReference type="Gene3D" id="3.30.1370.10">
    <property type="entry name" value="K Homology domain, type 1"/>
    <property type="match status" value="2"/>
</dbReference>
<dbReference type="InterPro" id="IPR008395">
    <property type="entry name" value="Agenet-like_dom"/>
</dbReference>
<dbReference type="InterPro" id="IPR040148">
    <property type="entry name" value="FMR1"/>
</dbReference>
<dbReference type="InterPro" id="IPR022034">
    <property type="entry name" value="FMR1-like_C_core"/>
</dbReference>
<dbReference type="InterPro" id="IPR040472">
    <property type="entry name" value="FMRP_KH0"/>
</dbReference>
<dbReference type="InterPro" id="IPR032172">
    <property type="entry name" value="FXR1_C1"/>
</dbReference>
<dbReference type="InterPro" id="IPR032177">
    <property type="entry name" value="FXR_C3"/>
</dbReference>
<dbReference type="InterPro" id="IPR004087">
    <property type="entry name" value="KH_dom"/>
</dbReference>
<dbReference type="InterPro" id="IPR004088">
    <property type="entry name" value="KH_dom_type_1"/>
</dbReference>
<dbReference type="InterPro" id="IPR036612">
    <property type="entry name" value="KH_dom_type_1_sf"/>
</dbReference>
<dbReference type="InterPro" id="IPR047494">
    <property type="entry name" value="KH_I_FXR1_rpt1"/>
</dbReference>
<dbReference type="InterPro" id="IPR047495">
    <property type="entry name" value="KH_I_FXR1_rpt2"/>
</dbReference>
<dbReference type="InterPro" id="IPR047496">
    <property type="entry name" value="KH_I_FXR1_rpt3"/>
</dbReference>
<dbReference type="InterPro" id="IPR047425">
    <property type="entry name" value="Tudor_Agenet_FXR1_rpt1"/>
</dbReference>
<dbReference type="InterPro" id="IPR047427">
    <property type="entry name" value="Tudor_Agenet_FXR1_rpt2"/>
</dbReference>
<dbReference type="InterPro" id="IPR041560">
    <property type="entry name" value="Tudor_FRM1"/>
</dbReference>
<dbReference type="PANTHER" id="PTHR10603">
    <property type="entry name" value="FRAGILE X MENTAL RETARDATION SYNDROME-RELATED PROTEIN"/>
    <property type="match status" value="1"/>
</dbReference>
<dbReference type="PANTHER" id="PTHR10603:SF6">
    <property type="entry name" value="RNA-BINDING PROTEIN FXR1"/>
    <property type="match status" value="1"/>
</dbReference>
<dbReference type="Pfam" id="PF05641">
    <property type="entry name" value="Agenet"/>
    <property type="match status" value="1"/>
</dbReference>
<dbReference type="Pfam" id="PF12235">
    <property type="entry name" value="FXMRP1_C_core"/>
    <property type="match status" value="2"/>
</dbReference>
<dbReference type="Pfam" id="PF16096">
    <property type="entry name" value="FXR_C1"/>
    <property type="match status" value="1"/>
</dbReference>
<dbReference type="Pfam" id="PF16097">
    <property type="entry name" value="FXR_C3"/>
    <property type="match status" value="1"/>
</dbReference>
<dbReference type="Pfam" id="PF00013">
    <property type="entry name" value="KH_1"/>
    <property type="match status" value="2"/>
</dbReference>
<dbReference type="Pfam" id="PF17904">
    <property type="entry name" value="KH_9"/>
    <property type="match status" value="1"/>
</dbReference>
<dbReference type="Pfam" id="PF18336">
    <property type="entry name" value="Tudor_FRX1"/>
    <property type="match status" value="1"/>
</dbReference>
<dbReference type="SMART" id="SM00322">
    <property type="entry name" value="KH"/>
    <property type="match status" value="2"/>
</dbReference>
<dbReference type="SUPFAM" id="SSF54791">
    <property type="entry name" value="Eukaryotic type KH-domain (KH-domain type I)"/>
    <property type="match status" value="2"/>
</dbReference>
<dbReference type="PROSITE" id="PS51641">
    <property type="entry name" value="AGENET_LIKE"/>
    <property type="match status" value="2"/>
</dbReference>
<dbReference type="PROSITE" id="PS50084">
    <property type="entry name" value="KH_TYPE_1"/>
    <property type="match status" value="2"/>
</dbReference>
<name>FXR1_CRIGR</name>
<comment type="function">
    <text evidence="2 5">mRNA-binding protein that acts as a regulator of mRNAs translation and/or stability, and which is required for various processes, such as neurogenesis, muscle development and spermatogenesis. Specifically binds to AU-rich elements (AREs) in the 3'-UTR of target mRNAs. Promotes formation of some phase-separated membraneless compartment by undergoing liquid-liquid phase separation upon binding to AREs-containing mRNAs, leading to assemble mRNAs into cytoplasmic ribonucleoprotein granules that concentrate mRNAs with associated regulatory factors. Required to activate translation of stored mRNAs during late spermatogenesis: acts by undergoing liquid-liquid phase separation to assemble target mRNAs into cytoplasmic ribonucleoprotein granules that recruit translation initiation factor EIF4G3 to activate translation of stored mRNAs in late spermatids (By similarity). Promotes translation of MYC transcripts by recruiting the eIF4F complex to the translation start site. Acts as a negative regulator of inflammation in response to IL19 by promoting destabilization of pro-inflammatory transcripts (By similarity). Also acts as an inhibitor of inflammation by binding to TNF mRNA, decreasing TNF protein production. Acts as a negative regulator of AMPA receptor GRIA2/GluA2 synthesis during long-lasting synaptic potentiation of hippocampal neurons by binding to GRIA2/GluA2 mRNA, thereby inhibiting its translation. Regulates proliferation of adult neural stem cells by binding to CDKN1A mRNA and promoting its expression. Acts as a regulator of sleep and synaptic homeostasis by regulating translation of transcripts in neurons. Required for embryonic and postnatal development of muscle tissue by undergoing liquid-liquid phase separation to assemble target mRNAs into cytoplasmic ribonucleoprotein granules (By similarity). Involved in the nuclear pore complex localization to the nuclear envelope by preventing cytoplasmic aggregation of nucleoporins: acts by preventing ectopic phase separation of nucleoporins in the cytoplasm via a microtubule-dependent mechanism (By similarity). Plays a role in the stabilization of PKP2 mRNA and therefore protein abundance, via its interaction with PKP3 (By similarity). May also do the same for PKP2, PKP3 and DSP via its interaction with PKP1 (By similarity). Forms a cytoplasmic messenger ribonucleoprotein (mRNP) network by packaging long mRNAs, serving as a scaffold that recruits proteins and signaling molecules. This network facilitates signaling reactions by maintaining proximity between kinases and substrates, crucial for processes like actomyosin reorganization (By similarity).</text>
</comment>
<comment type="subunit">
    <text evidence="2 5">Homodimer (via CC domains); homodiremization is required for FXR1-network nucleation (By similarity). Interacts with FMR1. Interacts with FRX2. Interacts with TDRD3. Interacts with HABP4 (By similarity). Interacts with CYFIP2 but not with CYFIP1. Interacts with EIF4G3; promoting translation of target mRNAs (By similarity). Interacts with ELAVL1. Interacts with CEP63; inhibiting 'Lys-63'-linked ubiquitination (By similarity). Interacts with PKP3; the interaction facilitates the binding of PKP3 to PKP2 mRNA (By similarity). Interacts with PKP1; the interaction may facilitate the binding of PKP1 to PKP2, PKP3 and DSP mRNA (By similarity).</text>
</comment>
<comment type="subcellular location">
    <subcellularLocation>
        <location evidence="5">Cytoplasm</location>
        <location evidence="5">Cytoplasmic ribonucleoprotein granule</location>
    </subcellularLocation>
    <subcellularLocation>
        <location evidence="2">Cytoplasm</location>
        <location evidence="2">Stress granule</location>
    </subcellularLocation>
    <subcellularLocation>
        <location evidence="5">Cytoplasm</location>
    </subcellularLocation>
    <subcellularLocation>
        <location evidence="5">Cell projection</location>
        <location evidence="5">Dendrite</location>
    </subcellularLocation>
    <subcellularLocation>
        <location evidence="5">Cell projection</location>
        <location evidence="5">Dendritic spine</location>
    </subcellularLocation>
    <subcellularLocation>
        <location evidence="5">Cell projection</location>
        <location evidence="5">Axon</location>
    </subcellularLocation>
    <subcellularLocation>
        <location evidence="2">Nucleus envelope</location>
    </subcellularLocation>
    <subcellularLocation>
        <location evidence="5">Postsynapse</location>
    </subcellularLocation>
    <text evidence="2 5">Specifically localizes to cytoplasmic ribonucleoprotein membraneless compartments (By similarity). Localizes to stress granules following phosphorylation at Ser-420 by PAK1 (By similarity). Adjacent to Z-lines in muscles (By similarity).</text>
</comment>
<comment type="domain">
    <text evidence="5">Disordered region at the C-terminus undergoes liquid-liquid phase separation (LLPS) for the formation of a membraneless compartment that stores mRNAs.</text>
</comment>
<comment type="domain">
    <text evidence="2">The tandem Agenet-like domains preferentially recognize trimethylated histone peptides.</text>
</comment>
<comment type="domain">
    <text evidence="2">CC1 and CC2 domains are required for homodimerization and FXR1-network nucleation. CC domains also mediate interaction with other proteins containing similar CC domains.</text>
</comment>
<comment type="PTM">
    <text evidence="2 5">Phosphorylation at Ser-420 by PAK1 promotes its relocalization to stress granules and activity (By similarity). Phosphorylated by MAPK1/ERK2, promoting subsequent phosphorylation by GSK3B. Phosphorylated by GSK3B, promoting ubiquitination and degradation by the proteasome (By similarity).</text>
</comment>
<comment type="PTM">
    <text evidence="2 5">Ubiquitinated by the SCF(FBXO4) complex, leading to its degradation by the proteasome: ubiquitination by the SCF(FBXO4) complex takes place following phosphorylation by GSK3B. Ubiquitinated and degraded in a GSK3B-dependent manner in during both scaling and sleep deprivation (By similarity). Ubiquitinated via 'Lys-63'-linked ubiquitin, leading to its degradation: interaction with CEP63 inhibits 'Lys-63'-linked ubiquitination (By similarity).</text>
</comment>
<comment type="similarity">
    <text evidence="9">Belongs to the FMR1 family.</text>
</comment>
<reference key="1">
    <citation type="journal article" date="1998" name="J. Biol. Chem.">
        <title>The fragile-X-related gene FXR1 is a human autoantigen processed during apoptosis.</title>
        <authorList>
            <person name="Bolivar J."/>
            <person name="Guelman S."/>
            <person name="Iglesias C."/>
            <person name="Ortiz M."/>
            <person name="Valdivia M.M."/>
        </authorList>
    </citation>
    <scope>NUCLEOTIDE SEQUENCE [MRNA]</scope>
    <source>
        <tissue>Ovary</tissue>
    </source>
</reference>